<evidence type="ECO:0000250" key="1"/>
<evidence type="ECO:0000250" key="2">
    <source>
        <dbReference type="UniProtKB" id="P0AC69"/>
    </source>
</evidence>
<evidence type="ECO:0000250" key="3">
    <source>
        <dbReference type="UniProtKB" id="Q03835"/>
    </source>
</evidence>
<evidence type="ECO:0000255" key="4">
    <source>
        <dbReference type="PROSITE-ProRule" id="PRU00686"/>
    </source>
</evidence>
<evidence type="ECO:0000255" key="5">
    <source>
        <dbReference type="PROSITE-ProRule" id="PRU00691"/>
    </source>
</evidence>
<evidence type="ECO:0000269" key="6">
    <source>
    </source>
</evidence>
<evidence type="ECO:0000269" key="7">
    <source>
    </source>
</evidence>
<evidence type="ECO:0000269" key="8">
    <source>
    </source>
</evidence>
<evidence type="ECO:0000303" key="9">
    <source>
    </source>
</evidence>
<evidence type="ECO:0000305" key="10"/>
<evidence type="ECO:0000312" key="11">
    <source>
        <dbReference type="Araport" id="AT4G04950"/>
    </source>
</evidence>
<evidence type="ECO:0000312" key="12">
    <source>
        <dbReference type="EMBL" id="AAD17344.1"/>
    </source>
</evidence>
<gene>
    <name evidence="9" type="primary">GRXS17</name>
    <name evidence="11" type="ordered locus">At4g04950</name>
    <name evidence="12" type="ORF">T1J1.6</name>
</gene>
<accession>Q9ZPH2</accession>
<name>GRS17_ARATH</name>
<proteinExistence type="evidence at protein level"/>
<sequence>MSGTVKDIVSKAELDNLRQSGAPVVLHFWASWCDASKQMDQVFSHLATDFPRAHFFRVEAEEHPEISEAYSVAAVPYFVFFKDGKTVDTLEGADPSSLANKVGKVAGSSTSAEPAAPASLGLAAGPTILETVKENAKASLQDRAQPVSTADALKSRLEKLTNSHPVMLFMKGIPEEPRCGFSRKVVDILKEVNVDFGSFDILSDNEVREGLKKFSNWPTFPQLYCNGELLGGADIAIAMHESGELKDAFKDLGITTVGSKESQDEAGKGGGVSSGNTGLSETLRARLEGLVNSKPVMLFMKGRPEEPKCGFSGKVVEILNQEKIEFGSFDILLDDEVRQGLKVYSNWSSYPQLYVKGELMGGSDIVLEMQKSGELKKVLTEKGITGEQSLEDRLKALINSSEVMLFMKGSPDEPKCGFSSKVVKALRGENVSFGSFDILTDEEVRQGIKNFSNWPTFPQLYYKGELIGGCDIIMELSESGDLKATLSE</sequence>
<dbReference type="EMBL" id="AF128393">
    <property type="protein sequence ID" value="AAD17344.1"/>
    <property type="molecule type" value="Genomic_DNA"/>
</dbReference>
<dbReference type="EMBL" id="AL161502">
    <property type="protein sequence ID" value="CAB81037.1"/>
    <property type="molecule type" value="Genomic_DNA"/>
</dbReference>
<dbReference type="EMBL" id="CP002687">
    <property type="protein sequence ID" value="AEE82446.1"/>
    <property type="molecule type" value="Genomic_DNA"/>
</dbReference>
<dbReference type="EMBL" id="AY058202">
    <property type="protein sequence ID" value="AAL25614.1"/>
    <property type="molecule type" value="mRNA"/>
</dbReference>
<dbReference type="EMBL" id="AY142003">
    <property type="protein sequence ID" value="AAM98267.1"/>
    <property type="molecule type" value="mRNA"/>
</dbReference>
<dbReference type="PIR" id="C85062">
    <property type="entry name" value="C85062"/>
</dbReference>
<dbReference type="RefSeq" id="NP_192404.1">
    <property type="nucleotide sequence ID" value="NM_116733.4"/>
</dbReference>
<dbReference type="SMR" id="Q9ZPH2"/>
<dbReference type="BioGRID" id="11146">
    <property type="interactions" value="43"/>
</dbReference>
<dbReference type="FunCoup" id="Q9ZPH2">
    <property type="interactions" value="4348"/>
</dbReference>
<dbReference type="IntAct" id="Q9ZPH2">
    <property type="interactions" value="9"/>
</dbReference>
<dbReference type="STRING" id="3702.Q9ZPH2"/>
<dbReference type="PaxDb" id="3702-AT4G04950.1"/>
<dbReference type="ProteomicsDB" id="222362"/>
<dbReference type="EnsemblPlants" id="AT4G04950.1">
    <property type="protein sequence ID" value="AT4G04950.1"/>
    <property type="gene ID" value="AT4G04950"/>
</dbReference>
<dbReference type="GeneID" id="825835"/>
<dbReference type="Gramene" id="AT4G04950.1">
    <property type="protein sequence ID" value="AT4G04950.1"/>
    <property type="gene ID" value="AT4G04950"/>
</dbReference>
<dbReference type="KEGG" id="ath:AT4G04950"/>
<dbReference type="Araport" id="AT4G04950"/>
<dbReference type="TAIR" id="AT4G04950">
    <property type="gene designation" value="GRXS17"/>
</dbReference>
<dbReference type="eggNOG" id="KOG0911">
    <property type="taxonomic scope" value="Eukaryota"/>
</dbReference>
<dbReference type="HOGENOM" id="CLU_026126_12_2_1"/>
<dbReference type="InParanoid" id="Q9ZPH2"/>
<dbReference type="OMA" id="HDIVMEL"/>
<dbReference type="PhylomeDB" id="Q9ZPH2"/>
<dbReference type="PRO" id="PR:Q9ZPH2"/>
<dbReference type="Proteomes" id="UP000006548">
    <property type="component" value="Chromosome 4"/>
</dbReference>
<dbReference type="ExpressionAtlas" id="Q9ZPH2">
    <property type="expression patterns" value="baseline and differential"/>
</dbReference>
<dbReference type="GO" id="GO:0005829">
    <property type="term" value="C:cytosol"/>
    <property type="evidence" value="ECO:0007005"/>
    <property type="project" value="TAIR"/>
</dbReference>
<dbReference type="GO" id="GO:0051537">
    <property type="term" value="F:2 iron, 2 sulfur cluster binding"/>
    <property type="evidence" value="ECO:0007669"/>
    <property type="project" value="UniProtKB-KW"/>
</dbReference>
<dbReference type="GO" id="GO:0046872">
    <property type="term" value="F:metal ion binding"/>
    <property type="evidence" value="ECO:0007669"/>
    <property type="project" value="UniProtKB-KW"/>
</dbReference>
<dbReference type="GO" id="GO:0009926">
    <property type="term" value="P:auxin polar transport"/>
    <property type="evidence" value="ECO:0000315"/>
    <property type="project" value="TAIR"/>
</dbReference>
<dbReference type="GO" id="GO:0006974">
    <property type="term" value="P:DNA damage response"/>
    <property type="evidence" value="ECO:0000315"/>
    <property type="project" value="TAIR"/>
</dbReference>
<dbReference type="GO" id="GO:0072593">
    <property type="term" value="P:reactive oxygen species metabolic process"/>
    <property type="evidence" value="ECO:0000315"/>
    <property type="project" value="TAIR"/>
</dbReference>
<dbReference type="GO" id="GO:0051726">
    <property type="term" value="P:regulation of cell cycle"/>
    <property type="evidence" value="ECO:0000270"/>
    <property type="project" value="TAIR"/>
</dbReference>
<dbReference type="GO" id="GO:0009408">
    <property type="term" value="P:response to heat"/>
    <property type="evidence" value="ECO:0000315"/>
    <property type="project" value="TAIR"/>
</dbReference>
<dbReference type="CDD" id="cd03028">
    <property type="entry name" value="GRX_PICOT_like"/>
    <property type="match status" value="3"/>
</dbReference>
<dbReference type="CDD" id="cd02984">
    <property type="entry name" value="TRX_PICOT"/>
    <property type="match status" value="1"/>
</dbReference>
<dbReference type="FunFam" id="3.40.30.10:FF:000012">
    <property type="entry name" value="Monothiol glutaredoxin"/>
    <property type="match status" value="3"/>
</dbReference>
<dbReference type="FunFam" id="3.40.30.10:FF:000092">
    <property type="entry name" value="Monothiol glutaredoxin"/>
    <property type="match status" value="1"/>
</dbReference>
<dbReference type="Gene3D" id="3.40.30.10">
    <property type="entry name" value="Glutaredoxin"/>
    <property type="match status" value="4"/>
</dbReference>
<dbReference type="InterPro" id="IPR002109">
    <property type="entry name" value="Glutaredoxin"/>
</dbReference>
<dbReference type="InterPro" id="IPR033658">
    <property type="entry name" value="GRX_PICOT-like"/>
</dbReference>
<dbReference type="InterPro" id="IPR004480">
    <property type="entry name" value="Monothiol_GRX-rel"/>
</dbReference>
<dbReference type="InterPro" id="IPR036249">
    <property type="entry name" value="Thioredoxin-like_sf"/>
</dbReference>
<dbReference type="InterPro" id="IPR013766">
    <property type="entry name" value="Thioredoxin_domain"/>
</dbReference>
<dbReference type="NCBIfam" id="TIGR00365">
    <property type="entry name" value="Grx4 family monothiol glutaredoxin"/>
    <property type="match status" value="3"/>
</dbReference>
<dbReference type="PANTHER" id="PTHR10293">
    <property type="entry name" value="GLUTAREDOXIN FAMILY MEMBER"/>
    <property type="match status" value="1"/>
</dbReference>
<dbReference type="PANTHER" id="PTHR10293:SF73">
    <property type="entry name" value="GLUTAREDOXIN-3"/>
    <property type="match status" value="1"/>
</dbReference>
<dbReference type="Pfam" id="PF00462">
    <property type="entry name" value="Glutaredoxin"/>
    <property type="match status" value="3"/>
</dbReference>
<dbReference type="Pfam" id="PF00085">
    <property type="entry name" value="Thioredoxin"/>
    <property type="match status" value="1"/>
</dbReference>
<dbReference type="SUPFAM" id="SSF52833">
    <property type="entry name" value="Thioredoxin-like"/>
    <property type="match status" value="4"/>
</dbReference>
<dbReference type="PROSITE" id="PS51354">
    <property type="entry name" value="GLUTAREDOXIN_2"/>
    <property type="match status" value="3"/>
</dbReference>
<dbReference type="PROSITE" id="PS51352">
    <property type="entry name" value="THIOREDOXIN_2"/>
    <property type="match status" value="1"/>
</dbReference>
<comment type="function">
    <text evidence="7 10">May only reduce GSH-thiol disulfides, but not protein disulfides (Probable). Participates probably to the maturation of iron-sulfur proteins and to the regulation of the redox state of the BOLA proteins. The GRXS17-BOLA2 heterodimer binds a labile, oxygen sensitive iron-sulfur cluster (PubMed:24714563).</text>
</comment>
<comment type="subunit">
    <text evidence="3 6 7 8">[2Fe-2S]-bridged holo-homodimer (By similarity). Interacts in vitro with SUFE1, BOLA1, BOLA2 and BOLA4 (PubMed:24203231). Interacts in vivo only with BOLA2 (PubMed:24203231, PubMed:24714563). Interacts with RGLG3 and RGLG4 (PubMed:27497447).</text>
</comment>
<comment type="subcellular location">
    <subcellularLocation>
        <location evidence="1">Cytoplasm</location>
    </subcellularLocation>
</comment>
<comment type="domain">
    <text evidence="6">The Glutaredoxin 2 domain is sufficient for interaction with all BOLA.</text>
</comment>
<comment type="PTM">
    <text evidence="8">Ubiquitinated at Lys-154. Polyubiquitinated by RGLG3 and RGLG4. Polyubiquitination of GRXS17 leads to its degradation by the proteasome.</text>
</comment>
<comment type="similarity">
    <text evidence="10">Belongs to the glutaredoxin family. CGFS subfamily.</text>
</comment>
<keyword id="KW-0001">2Fe-2S</keyword>
<keyword id="KW-0963">Cytoplasm</keyword>
<keyword id="KW-0408">Iron</keyword>
<keyword id="KW-0411">Iron-sulfur</keyword>
<keyword id="KW-0479">Metal-binding</keyword>
<keyword id="KW-0676">Redox-active center</keyword>
<keyword id="KW-1185">Reference proteome</keyword>
<keyword id="KW-0677">Repeat</keyword>
<keyword id="KW-0832">Ubl conjugation</keyword>
<protein>
    <recommendedName>
        <fullName evidence="9">Monothiol glutaredoxin-S17</fullName>
        <shortName evidence="9">AtGrxS17</shortName>
    </recommendedName>
</protein>
<feature type="chain" id="PRO_0000268737" description="Monothiol glutaredoxin-S17">
    <location>
        <begin position="1"/>
        <end position="488"/>
    </location>
</feature>
<feature type="domain" description="Thioredoxin" evidence="5">
    <location>
        <begin position="2"/>
        <end position="107"/>
    </location>
</feature>
<feature type="domain" description="Glutaredoxin 1" evidence="4">
    <location>
        <begin position="154"/>
        <end position="256"/>
    </location>
</feature>
<feature type="domain" description="Glutaredoxin 2" evidence="4">
    <location>
        <begin position="284"/>
        <end position="386"/>
    </location>
</feature>
<feature type="domain" description="Glutaredoxin 3" evidence="4">
    <location>
        <begin position="391"/>
        <end position="488"/>
    </location>
</feature>
<feature type="binding site" evidence="2">
    <location>
        <position position="408"/>
    </location>
    <ligand>
        <name>glutathione</name>
        <dbReference type="ChEBI" id="CHEBI:57925"/>
    </ligand>
</feature>
<feature type="binding site" evidence="2">
    <location>
        <position position="416"/>
    </location>
    <ligand>
        <name>[2Fe-2S] cluster</name>
        <dbReference type="ChEBI" id="CHEBI:190135"/>
        <note>ligand shared between dimeric partners</note>
    </ligand>
</feature>
<feature type="binding site" evidence="2">
    <location>
        <position position="445"/>
    </location>
    <ligand>
        <name>glutathione</name>
        <dbReference type="ChEBI" id="CHEBI:57925"/>
    </ligand>
</feature>
<feature type="binding site" evidence="2">
    <location>
        <position position="457"/>
    </location>
    <ligand>
        <name>glutathione</name>
        <dbReference type="ChEBI" id="CHEBI:57925"/>
    </ligand>
</feature>
<feature type="binding site" evidence="2">
    <location>
        <begin position="470"/>
        <end position="471"/>
    </location>
    <ligand>
        <name>glutathione</name>
        <dbReference type="ChEBI" id="CHEBI:57925"/>
    </ligand>
</feature>
<organism>
    <name type="scientific">Arabidopsis thaliana</name>
    <name type="common">Mouse-ear cress</name>
    <dbReference type="NCBI Taxonomy" id="3702"/>
    <lineage>
        <taxon>Eukaryota</taxon>
        <taxon>Viridiplantae</taxon>
        <taxon>Streptophyta</taxon>
        <taxon>Embryophyta</taxon>
        <taxon>Tracheophyta</taxon>
        <taxon>Spermatophyta</taxon>
        <taxon>Magnoliopsida</taxon>
        <taxon>eudicotyledons</taxon>
        <taxon>Gunneridae</taxon>
        <taxon>Pentapetalae</taxon>
        <taxon>rosids</taxon>
        <taxon>malvids</taxon>
        <taxon>Brassicales</taxon>
        <taxon>Brassicaceae</taxon>
        <taxon>Camelineae</taxon>
        <taxon>Arabidopsis</taxon>
    </lineage>
</organism>
<reference key="1">
    <citation type="journal article" date="1999" name="Nature">
        <title>Sequence and analysis of chromosome 4 of the plant Arabidopsis thaliana.</title>
        <authorList>
            <person name="Mayer K.F.X."/>
            <person name="Schueller C."/>
            <person name="Wambutt R."/>
            <person name="Murphy G."/>
            <person name="Volckaert G."/>
            <person name="Pohl T."/>
            <person name="Duesterhoeft A."/>
            <person name="Stiekema W."/>
            <person name="Entian K.-D."/>
            <person name="Terryn N."/>
            <person name="Harris B."/>
            <person name="Ansorge W."/>
            <person name="Brandt P."/>
            <person name="Grivell L.A."/>
            <person name="Rieger M."/>
            <person name="Weichselgartner M."/>
            <person name="de Simone V."/>
            <person name="Obermaier B."/>
            <person name="Mache R."/>
            <person name="Mueller M."/>
            <person name="Kreis M."/>
            <person name="Delseny M."/>
            <person name="Puigdomenech P."/>
            <person name="Watson M."/>
            <person name="Schmidtheini T."/>
            <person name="Reichert B."/>
            <person name="Portetelle D."/>
            <person name="Perez-Alonso M."/>
            <person name="Boutry M."/>
            <person name="Bancroft I."/>
            <person name="Vos P."/>
            <person name="Hoheisel J."/>
            <person name="Zimmermann W."/>
            <person name="Wedler H."/>
            <person name="Ridley P."/>
            <person name="Langham S.-A."/>
            <person name="McCullagh B."/>
            <person name="Bilham L."/>
            <person name="Robben J."/>
            <person name="van der Schueren J."/>
            <person name="Grymonprez B."/>
            <person name="Chuang Y.-J."/>
            <person name="Vandenbussche F."/>
            <person name="Braeken M."/>
            <person name="Weltjens I."/>
            <person name="Voet M."/>
            <person name="Bastiaens I."/>
            <person name="Aert R."/>
            <person name="Defoor E."/>
            <person name="Weitzenegger T."/>
            <person name="Bothe G."/>
            <person name="Ramsperger U."/>
            <person name="Hilbert H."/>
            <person name="Braun M."/>
            <person name="Holzer E."/>
            <person name="Brandt A."/>
            <person name="Peters S."/>
            <person name="van Staveren M."/>
            <person name="Dirkse W."/>
            <person name="Mooijman P."/>
            <person name="Klein Lankhorst R."/>
            <person name="Rose M."/>
            <person name="Hauf J."/>
            <person name="Koetter P."/>
            <person name="Berneiser S."/>
            <person name="Hempel S."/>
            <person name="Feldpausch M."/>
            <person name="Lamberth S."/>
            <person name="Van den Daele H."/>
            <person name="De Keyser A."/>
            <person name="Buysshaert C."/>
            <person name="Gielen J."/>
            <person name="Villarroel R."/>
            <person name="De Clercq R."/>
            <person name="van Montagu M."/>
            <person name="Rogers J."/>
            <person name="Cronin A."/>
            <person name="Quail M.A."/>
            <person name="Bray-Allen S."/>
            <person name="Clark L."/>
            <person name="Doggett J."/>
            <person name="Hall S."/>
            <person name="Kay M."/>
            <person name="Lennard N."/>
            <person name="McLay K."/>
            <person name="Mayes R."/>
            <person name="Pettett A."/>
            <person name="Rajandream M.A."/>
            <person name="Lyne M."/>
            <person name="Benes V."/>
            <person name="Rechmann S."/>
            <person name="Borkova D."/>
            <person name="Bloecker H."/>
            <person name="Scharfe M."/>
            <person name="Grimm M."/>
            <person name="Loehnert T.-H."/>
            <person name="Dose S."/>
            <person name="de Haan M."/>
            <person name="Maarse A.C."/>
            <person name="Schaefer M."/>
            <person name="Mueller-Auer S."/>
            <person name="Gabel C."/>
            <person name="Fuchs M."/>
            <person name="Fartmann B."/>
            <person name="Granderath K."/>
            <person name="Dauner D."/>
            <person name="Herzl A."/>
            <person name="Neumann S."/>
            <person name="Argiriou A."/>
            <person name="Vitale D."/>
            <person name="Liguori R."/>
            <person name="Piravandi E."/>
            <person name="Massenet O."/>
            <person name="Quigley F."/>
            <person name="Clabauld G."/>
            <person name="Muendlein A."/>
            <person name="Felber R."/>
            <person name="Schnabl S."/>
            <person name="Hiller R."/>
            <person name="Schmidt W."/>
            <person name="Lecharny A."/>
            <person name="Aubourg S."/>
            <person name="Chefdor F."/>
            <person name="Cooke R."/>
            <person name="Berger C."/>
            <person name="Monfort A."/>
            <person name="Casacuberta E."/>
            <person name="Gibbons T."/>
            <person name="Weber N."/>
            <person name="Vandenbol M."/>
            <person name="Bargues M."/>
            <person name="Terol J."/>
            <person name="Torres A."/>
            <person name="Perez-Perez A."/>
            <person name="Purnelle B."/>
            <person name="Bent E."/>
            <person name="Johnson S."/>
            <person name="Tacon D."/>
            <person name="Jesse T."/>
            <person name="Heijnen L."/>
            <person name="Schwarz S."/>
            <person name="Scholler P."/>
            <person name="Heber S."/>
            <person name="Francs P."/>
            <person name="Bielke C."/>
            <person name="Frishman D."/>
            <person name="Haase D."/>
            <person name="Lemcke K."/>
            <person name="Mewes H.-W."/>
            <person name="Stocker S."/>
            <person name="Zaccaria P."/>
            <person name="Bevan M."/>
            <person name="Wilson R.K."/>
            <person name="de la Bastide M."/>
            <person name="Habermann K."/>
            <person name="Parnell L."/>
            <person name="Dedhia N."/>
            <person name="Gnoj L."/>
            <person name="Schutz K."/>
            <person name="Huang E."/>
            <person name="Spiegel L."/>
            <person name="Sekhon M."/>
            <person name="Murray J."/>
            <person name="Sheet P."/>
            <person name="Cordes M."/>
            <person name="Abu-Threideh J."/>
            <person name="Stoneking T."/>
            <person name="Kalicki J."/>
            <person name="Graves T."/>
            <person name="Harmon G."/>
            <person name="Edwards J."/>
            <person name="Latreille P."/>
            <person name="Courtney L."/>
            <person name="Cloud J."/>
            <person name="Abbott A."/>
            <person name="Scott K."/>
            <person name="Johnson D."/>
            <person name="Minx P."/>
            <person name="Bentley D."/>
            <person name="Fulton B."/>
            <person name="Miller N."/>
            <person name="Greco T."/>
            <person name="Kemp K."/>
            <person name="Kramer J."/>
            <person name="Fulton L."/>
            <person name="Mardis E."/>
            <person name="Dante M."/>
            <person name="Pepin K."/>
            <person name="Hillier L.W."/>
            <person name="Nelson J."/>
            <person name="Spieth J."/>
            <person name="Ryan E."/>
            <person name="Andrews S."/>
            <person name="Geisel C."/>
            <person name="Layman D."/>
            <person name="Du H."/>
            <person name="Ali J."/>
            <person name="Berghoff A."/>
            <person name="Jones K."/>
            <person name="Drone K."/>
            <person name="Cotton M."/>
            <person name="Joshu C."/>
            <person name="Antonoiu B."/>
            <person name="Zidanic M."/>
            <person name="Strong C."/>
            <person name="Sun H."/>
            <person name="Lamar B."/>
            <person name="Yordan C."/>
            <person name="Ma P."/>
            <person name="Zhong J."/>
            <person name="Preston R."/>
            <person name="Vil D."/>
            <person name="Shekher M."/>
            <person name="Matero A."/>
            <person name="Shah R."/>
            <person name="Swaby I.K."/>
            <person name="O'Shaughnessy A."/>
            <person name="Rodriguez M."/>
            <person name="Hoffman J."/>
            <person name="Till S."/>
            <person name="Granat S."/>
            <person name="Shohdy N."/>
            <person name="Hasegawa A."/>
            <person name="Hameed A."/>
            <person name="Lodhi M."/>
            <person name="Johnson A."/>
            <person name="Chen E."/>
            <person name="Marra M.A."/>
            <person name="Martienssen R."/>
            <person name="McCombie W.R."/>
        </authorList>
    </citation>
    <scope>NUCLEOTIDE SEQUENCE [LARGE SCALE GENOMIC DNA]</scope>
    <source>
        <strain>cv. Columbia</strain>
    </source>
</reference>
<reference key="2">
    <citation type="journal article" date="2017" name="Plant J.">
        <title>Araport11: a complete reannotation of the Arabidopsis thaliana reference genome.</title>
        <authorList>
            <person name="Cheng C.Y."/>
            <person name="Krishnakumar V."/>
            <person name="Chan A.P."/>
            <person name="Thibaud-Nissen F."/>
            <person name="Schobel S."/>
            <person name="Town C.D."/>
        </authorList>
    </citation>
    <scope>GENOME REANNOTATION</scope>
    <source>
        <strain>cv. Columbia</strain>
    </source>
</reference>
<reference key="3">
    <citation type="journal article" date="2003" name="Science">
        <title>Empirical analysis of transcriptional activity in the Arabidopsis genome.</title>
        <authorList>
            <person name="Yamada K."/>
            <person name="Lim J."/>
            <person name="Dale J.M."/>
            <person name="Chen H."/>
            <person name="Shinn P."/>
            <person name="Palm C.J."/>
            <person name="Southwick A.M."/>
            <person name="Wu H.C."/>
            <person name="Kim C.J."/>
            <person name="Nguyen M."/>
            <person name="Pham P.K."/>
            <person name="Cheuk R.F."/>
            <person name="Karlin-Newmann G."/>
            <person name="Liu S.X."/>
            <person name="Lam B."/>
            <person name="Sakano H."/>
            <person name="Wu T."/>
            <person name="Yu G."/>
            <person name="Miranda M."/>
            <person name="Quach H.L."/>
            <person name="Tripp M."/>
            <person name="Chang C.H."/>
            <person name="Lee J.M."/>
            <person name="Toriumi M.J."/>
            <person name="Chan M.M."/>
            <person name="Tang C.C."/>
            <person name="Onodera C.S."/>
            <person name="Deng J.M."/>
            <person name="Akiyama K."/>
            <person name="Ansari Y."/>
            <person name="Arakawa T."/>
            <person name="Banh J."/>
            <person name="Banno F."/>
            <person name="Bowser L."/>
            <person name="Brooks S.Y."/>
            <person name="Carninci P."/>
            <person name="Chao Q."/>
            <person name="Choy N."/>
            <person name="Enju A."/>
            <person name="Goldsmith A.D."/>
            <person name="Gurjal M."/>
            <person name="Hansen N.F."/>
            <person name="Hayashizaki Y."/>
            <person name="Johnson-Hopson C."/>
            <person name="Hsuan V.W."/>
            <person name="Iida K."/>
            <person name="Karnes M."/>
            <person name="Khan S."/>
            <person name="Koesema E."/>
            <person name="Ishida J."/>
            <person name="Jiang P.X."/>
            <person name="Jones T."/>
            <person name="Kawai J."/>
            <person name="Kamiya A."/>
            <person name="Meyers C."/>
            <person name="Nakajima M."/>
            <person name="Narusaka M."/>
            <person name="Seki M."/>
            <person name="Sakurai T."/>
            <person name="Satou M."/>
            <person name="Tamse R."/>
            <person name="Vaysberg M."/>
            <person name="Wallender E.K."/>
            <person name="Wong C."/>
            <person name="Yamamura Y."/>
            <person name="Yuan S."/>
            <person name="Shinozaki K."/>
            <person name="Davis R.W."/>
            <person name="Theologis A."/>
            <person name="Ecker J.R."/>
        </authorList>
    </citation>
    <scope>NUCLEOTIDE SEQUENCE [LARGE SCALE MRNA]</scope>
    <source>
        <strain>cv. Columbia</strain>
    </source>
</reference>
<reference key="4">
    <citation type="journal article" date="2004" name="Cell. Mol. Life Sci.">
        <title>Plant glutaredoxins: still mysterious reducing systems.</title>
        <authorList>
            <person name="Rouhier N."/>
            <person name="Gelhaye E."/>
            <person name="Jacquot J.-P."/>
        </authorList>
    </citation>
    <scope>GENE FAMILY</scope>
    <scope>NOMENCLATURE</scope>
</reference>
<reference key="5">
    <citation type="journal article" date="2006" name="J. Exp. Bot.">
        <title>Genome-wide analysis of plant glutaredoxin systems.</title>
        <authorList>
            <person name="Rouhier N."/>
            <person name="Couturier J."/>
            <person name="Jacquot J.-P."/>
        </authorList>
    </citation>
    <scope>GENE FAMILY</scope>
</reference>
<reference key="6">
    <citation type="journal article" date="2014" name="Mol. Plant">
        <title>Monothiol glutaredoxin-BolA interactions: redox control of Arabidopsis thaliana BolA2 and SufE1.</title>
        <authorList>
            <person name="Couturier J."/>
            <person name="Wu H.C."/>
            <person name="Dhalleine T."/>
            <person name="Pegeot H."/>
            <person name="Sudre D."/>
            <person name="Gualberto J.M."/>
            <person name="Jacquot J.P."/>
            <person name="Gaymard F."/>
            <person name="Vignols F."/>
            <person name="Rouhier N."/>
        </authorList>
    </citation>
    <scope>INTERACTION WITH SUFE1; BOLA1; BOLA2 AND BOLA4</scope>
    <scope>DOMAIN</scope>
</reference>
<reference key="7">
    <citation type="journal article" date="2014" name="Plant Signal. Behav.">
        <title>Putative roles of glutaredoxin-BolA holo-heterodimers in plants.</title>
        <authorList>
            <person name="Dhalleine T."/>
            <person name="Rouhier N."/>
            <person name="Couturier J."/>
        </authorList>
    </citation>
    <scope>FUNCTION</scope>
    <scope>INTERACTION WITH BOLA2</scope>
</reference>
<reference key="8">
    <citation type="journal article" date="2016" name="Plant Cell Physiol.">
        <title>The Arabidopsis iron-sulfur protein GRXS17 is a target of the ubiquitin E3 ligases RGLG3 and RGLG4.</title>
        <authorList>
            <person name="Nagels Durand A."/>
            <person name="Inigo S."/>
            <person name="Ritter A."/>
            <person name="Iniesto E."/>
            <person name="De Clercq R."/>
            <person name="Staes A."/>
            <person name="Van Leene J."/>
            <person name="Rubio V."/>
            <person name="Gevaert K."/>
            <person name="De Jaeger G."/>
            <person name="Pauwels L."/>
            <person name="Goossens A."/>
        </authorList>
    </citation>
    <scope>IDENTIFICATION BY MASS SPECTROMETRY</scope>
    <scope>INTERACTION WITH RGLG3 AND RGLG4</scope>
    <scope>UBIQUITINATION AT LYS-154</scope>
</reference>